<proteinExistence type="inferred from homology"/>
<reference key="1">
    <citation type="journal article" date="2006" name="Proc. Natl. Acad. Sci. U.S.A.">
        <title>Molecular genetic anatomy of inter- and intraserotype variation in the human bacterial pathogen group A Streptococcus.</title>
        <authorList>
            <person name="Beres S.B."/>
            <person name="Richter E.W."/>
            <person name="Nagiec M.J."/>
            <person name="Sumby P."/>
            <person name="Porcella S.F."/>
            <person name="DeLeo F.R."/>
            <person name="Musser J.M."/>
        </authorList>
    </citation>
    <scope>NUCLEOTIDE SEQUENCE [LARGE SCALE GENOMIC DNA]</scope>
    <source>
        <strain>MGAS9429</strain>
    </source>
</reference>
<organism>
    <name type="scientific">Streptococcus pyogenes serotype M12 (strain MGAS9429)</name>
    <dbReference type="NCBI Taxonomy" id="370551"/>
    <lineage>
        <taxon>Bacteria</taxon>
        <taxon>Bacillati</taxon>
        <taxon>Bacillota</taxon>
        <taxon>Bacilli</taxon>
        <taxon>Lactobacillales</taxon>
        <taxon>Streptococcaceae</taxon>
        <taxon>Streptococcus</taxon>
    </lineage>
</organism>
<feature type="chain" id="PRO_0000302308" description="Large ribosomal subunit protein bL36">
    <location>
        <begin position="1"/>
        <end position="38"/>
    </location>
</feature>
<sequence length="38" mass="4451">MKVRPSVKPICEYCKVIRRNGRVMVICPTNPKHKQRQG</sequence>
<gene>
    <name evidence="1" type="primary">rpmJ</name>
    <name type="ordered locus">MGAS9429_Spy0067</name>
</gene>
<dbReference type="EMBL" id="CP000259">
    <property type="protein sequence ID" value="ABF31255.1"/>
    <property type="molecule type" value="Genomic_DNA"/>
</dbReference>
<dbReference type="RefSeq" id="WP_000868345.1">
    <property type="nucleotide sequence ID" value="NC_008021.1"/>
</dbReference>
<dbReference type="SMR" id="Q1JNZ4"/>
<dbReference type="GeneID" id="93860206"/>
<dbReference type="KEGG" id="spk:MGAS9429_Spy0067"/>
<dbReference type="HOGENOM" id="CLU_135723_6_2_9"/>
<dbReference type="Proteomes" id="UP000002433">
    <property type="component" value="Chromosome"/>
</dbReference>
<dbReference type="GO" id="GO:0005737">
    <property type="term" value="C:cytoplasm"/>
    <property type="evidence" value="ECO:0007669"/>
    <property type="project" value="UniProtKB-ARBA"/>
</dbReference>
<dbReference type="GO" id="GO:1990904">
    <property type="term" value="C:ribonucleoprotein complex"/>
    <property type="evidence" value="ECO:0007669"/>
    <property type="project" value="UniProtKB-KW"/>
</dbReference>
<dbReference type="GO" id="GO:0005840">
    <property type="term" value="C:ribosome"/>
    <property type="evidence" value="ECO:0007669"/>
    <property type="project" value="UniProtKB-KW"/>
</dbReference>
<dbReference type="GO" id="GO:0003735">
    <property type="term" value="F:structural constituent of ribosome"/>
    <property type="evidence" value="ECO:0007669"/>
    <property type="project" value="InterPro"/>
</dbReference>
<dbReference type="GO" id="GO:0006412">
    <property type="term" value="P:translation"/>
    <property type="evidence" value="ECO:0007669"/>
    <property type="project" value="UniProtKB-UniRule"/>
</dbReference>
<dbReference type="HAMAP" id="MF_00251">
    <property type="entry name" value="Ribosomal_bL36"/>
    <property type="match status" value="1"/>
</dbReference>
<dbReference type="InterPro" id="IPR000473">
    <property type="entry name" value="Ribosomal_bL36"/>
</dbReference>
<dbReference type="InterPro" id="IPR035977">
    <property type="entry name" value="Ribosomal_bL36_sp"/>
</dbReference>
<dbReference type="NCBIfam" id="TIGR01022">
    <property type="entry name" value="rpmJ_bact"/>
    <property type="match status" value="1"/>
</dbReference>
<dbReference type="PANTHER" id="PTHR42888">
    <property type="entry name" value="50S RIBOSOMAL PROTEIN L36, CHLOROPLASTIC"/>
    <property type="match status" value="1"/>
</dbReference>
<dbReference type="PANTHER" id="PTHR42888:SF1">
    <property type="entry name" value="LARGE RIBOSOMAL SUBUNIT PROTEIN BL36C"/>
    <property type="match status" value="1"/>
</dbReference>
<dbReference type="Pfam" id="PF00444">
    <property type="entry name" value="Ribosomal_L36"/>
    <property type="match status" value="1"/>
</dbReference>
<dbReference type="SUPFAM" id="SSF57840">
    <property type="entry name" value="Ribosomal protein L36"/>
    <property type="match status" value="1"/>
</dbReference>
<dbReference type="PROSITE" id="PS00828">
    <property type="entry name" value="RIBOSOMAL_L36"/>
    <property type="match status" value="1"/>
</dbReference>
<accession>Q1JNZ4</accession>
<comment type="similarity">
    <text evidence="1">Belongs to the bacterial ribosomal protein bL36 family.</text>
</comment>
<keyword id="KW-0687">Ribonucleoprotein</keyword>
<keyword id="KW-0689">Ribosomal protein</keyword>
<evidence type="ECO:0000255" key="1">
    <source>
        <dbReference type="HAMAP-Rule" id="MF_00251"/>
    </source>
</evidence>
<evidence type="ECO:0000305" key="2"/>
<name>RL36_STRPC</name>
<protein>
    <recommendedName>
        <fullName evidence="1">Large ribosomal subunit protein bL36</fullName>
    </recommendedName>
    <alternativeName>
        <fullName evidence="2">50S ribosomal protein L36</fullName>
    </alternativeName>
</protein>